<keyword id="KW-0012">Acyltransferase</keyword>
<keyword id="KW-0963">Cytoplasm</keyword>
<keyword id="KW-0276">Fatty acid metabolism</keyword>
<keyword id="KW-0442">Lipid degradation</keyword>
<keyword id="KW-0443">Lipid metabolism</keyword>
<keyword id="KW-0808">Transferase</keyword>
<proteinExistence type="inferred from homology"/>
<protein>
    <recommendedName>
        <fullName evidence="1">3-ketoacyl-CoA thiolase</fullName>
        <ecNumber evidence="1">2.3.1.16</ecNumber>
    </recommendedName>
    <alternativeName>
        <fullName evidence="1">Acetyl-CoA acyltransferase</fullName>
    </alternativeName>
    <alternativeName>
        <fullName evidence="1">Beta-ketothiolase</fullName>
    </alternativeName>
    <alternativeName>
        <fullName evidence="1">Fatty acid oxidation complex subunit beta</fullName>
    </alternativeName>
</protein>
<evidence type="ECO:0000255" key="1">
    <source>
        <dbReference type="HAMAP-Rule" id="MF_01620"/>
    </source>
</evidence>
<sequence length="387" mass="40623">MKQAVIVDCIRTPMGRSKAGVFRNVRAETLSAELMKGLLLRNPQLDPNAIEDVIWGCVQQTLEQGFNIARNASLLAGIPKTAGAVTVNRLCGSSMEAIHQAARAIMTGMGDTFIIGGVEHMGHVPMNHGVDFHPGLANNVAKASGMMGLTAEMLGKLHGISREQQDAFAVRSHQRAHAATVEGRFAKEIYAIEGHDANGALIKVLHDEVIRPETSMESLAALRPVFDPANGTVTAGTSSALSDGASAMLVMEESKARALGLPIRARIRSMAVAGCDAAIMGYGPVPATQKALARAGITVNDLDVIELNEAFAAQSLPCVKDLGLLDVVDEKINLNGGAIALGHPLGCSGARISTTLINLMEHKDATLGLATMCIGLGQGIATVFERV</sequence>
<organism>
    <name type="scientific">Shewanella sp. (strain MR-7)</name>
    <dbReference type="NCBI Taxonomy" id="60481"/>
    <lineage>
        <taxon>Bacteria</taxon>
        <taxon>Pseudomonadati</taxon>
        <taxon>Pseudomonadota</taxon>
        <taxon>Gammaproteobacteria</taxon>
        <taxon>Alteromonadales</taxon>
        <taxon>Shewanellaceae</taxon>
        <taxon>Shewanella</taxon>
    </lineage>
</organism>
<feature type="chain" id="PRO_0000292906" description="3-ketoacyl-CoA thiolase">
    <location>
        <begin position="1"/>
        <end position="387"/>
    </location>
</feature>
<feature type="active site" description="Acyl-thioester intermediate" evidence="1">
    <location>
        <position position="91"/>
    </location>
</feature>
<feature type="active site" description="Proton acceptor" evidence="1">
    <location>
        <position position="343"/>
    </location>
</feature>
<feature type="active site" description="Proton acceptor" evidence="1">
    <location>
        <position position="373"/>
    </location>
</feature>
<gene>
    <name evidence="1" type="primary">fadA</name>
    <name type="ordered locus">Shewmr7_0015</name>
</gene>
<dbReference type="EC" id="2.3.1.16" evidence="1"/>
<dbReference type="EMBL" id="CP000444">
    <property type="protein sequence ID" value="ABI41021.1"/>
    <property type="molecule type" value="Genomic_DNA"/>
</dbReference>
<dbReference type="SMR" id="Q0I0T4"/>
<dbReference type="KEGG" id="shm:Shewmr7_0015"/>
<dbReference type="HOGENOM" id="CLU_031026_2_3_6"/>
<dbReference type="UniPathway" id="UPA00659"/>
<dbReference type="GO" id="GO:0005737">
    <property type="term" value="C:cytoplasm"/>
    <property type="evidence" value="ECO:0007669"/>
    <property type="project" value="UniProtKB-SubCell"/>
</dbReference>
<dbReference type="GO" id="GO:0003988">
    <property type="term" value="F:acetyl-CoA C-acyltransferase activity"/>
    <property type="evidence" value="ECO:0007669"/>
    <property type="project" value="UniProtKB-UniRule"/>
</dbReference>
<dbReference type="GO" id="GO:0006635">
    <property type="term" value="P:fatty acid beta-oxidation"/>
    <property type="evidence" value="ECO:0007669"/>
    <property type="project" value="UniProtKB-UniRule"/>
</dbReference>
<dbReference type="GO" id="GO:0010124">
    <property type="term" value="P:phenylacetate catabolic process"/>
    <property type="evidence" value="ECO:0007669"/>
    <property type="project" value="TreeGrafter"/>
</dbReference>
<dbReference type="CDD" id="cd00751">
    <property type="entry name" value="thiolase"/>
    <property type="match status" value="1"/>
</dbReference>
<dbReference type="FunFam" id="3.40.47.10:FF:000010">
    <property type="entry name" value="Acetyl-CoA acetyltransferase (Thiolase)"/>
    <property type="match status" value="1"/>
</dbReference>
<dbReference type="Gene3D" id="3.40.47.10">
    <property type="match status" value="2"/>
</dbReference>
<dbReference type="HAMAP" id="MF_01620">
    <property type="entry name" value="FadA"/>
    <property type="match status" value="1"/>
</dbReference>
<dbReference type="InterPro" id="IPR012805">
    <property type="entry name" value="FadA"/>
</dbReference>
<dbReference type="InterPro" id="IPR002155">
    <property type="entry name" value="Thiolase"/>
</dbReference>
<dbReference type="InterPro" id="IPR016039">
    <property type="entry name" value="Thiolase-like"/>
</dbReference>
<dbReference type="InterPro" id="IPR050215">
    <property type="entry name" value="Thiolase-like_sf_Thiolase"/>
</dbReference>
<dbReference type="InterPro" id="IPR020615">
    <property type="entry name" value="Thiolase_acyl_enz_int_AS"/>
</dbReference>
<dbReference type="InterPro" id="IPR020610">
    <property type="entry name" value="Thiolase_AS"/>
</dbReference>
<dbReference type="InterPro" id="IPR020617">
    <property type="entry name" value="Thiolase_C"/>
</dbReference>
<dbReference type="InterPro" id="IPR020613">
    <property type="entry name" value="Thiolase_CS"/>
</dbReference>
<dbReference type="InterPro" id="IPR020616">
    <property type="entry name" value="Thiolase_N"/>
</dbReference>
<dbReference type="NCBIfam" id="TIGR01930">
    <property type="entry name" value="AcCoA-C-Actrans"/>
    <property type="match status" value="1"/>
</dbReference>
<dbReference type="NCBIfam" id="TIGR02445">
    <property type="entry name" value="fadA"/>
    <property type="match status" value="1"/>
</dbReference>
<dbReference type="NCBIfam" id="NF006510">
    <property type="entry name" value="PRK08947.1"/>
    <property type="match status" value="1"/>
</dbReference>
<dbReference type="PANTHER" id="PTHR43853:SF11">
    <property type="entry name" value="3-KETOACYL-COA THIOLASE FADA"/>
    <property type="match status" value="1"/>
</dbReference>
<dbReference type="PANTHER" id="PTHR43853">
    <property type="entry name" value="3-KETOACYL-COA THIOLASE, PEROXISOMAL"/>
    <property type="match status" value="1"/>
</dbReference>
<dbReference type="Pfam" id="PF02803">
    <property type="entry name" value="Thiolase_C"/>
    <property type="match status" value="1"/>
</dbReference>
<dbReference type="Pfam" id="PF00108">
    <property type="entry name" value="Thiolase_N"/>
    <property type="match status" value="1"/>
</dbReference>
<dbReference type="PIRSF" id="PIRSF000429">
    <property type="entry name" value="Ac-CoA_Ac_transf"/>
    <property type="match status" value="1"/>
</dbReference>
<dbReference type="SUPFAM" id="SSF53901">
    <property type="entry name" value="Thiolase-like"/>
    <property type="match status" value="2"/>
</dbReference>
<dbReference type="PROSITE" id="PS00098">
    <property type="entry name" value="THIOLASE_1"/>
    <property type="match status" value="1"/>
</dbReference>
<dbReference type="PROSITE" id="PS00737">
    <property type="entry name" value="THIOLASE_2"/>
    <property type="match status" value="1"/>
</dbReference>
<dbReference type="PROSITE" id="PS00099">
    <property type="entry name" value="THIOLASE_3"/>
    <property type="match status" value="1"/>
</dbReference>
<reference key="1">
    <citation type="submission" date="2006-08" db="EMBL/GenBank/DDBJ databases">
        <title>Complete sequence of chromosome 1 of Shewanella sp. MR-7.</title>
        <authorList>
            <person name="Copeland A."/>
            <person name="Lucas S."/>
            <person name="Lapidus A."/>
            <person name="Barry K."/>
            <person name="Detter J.C."/>
            <person name="Glavina del Rio T."/>
            <person name="Hammon N."/>
            <person name="Israni S."/>
            <person name="Dalin E."/>
            <person name="Tice H."/>
            <person name="Pitluck S."/>
            <person name="Kiss H."/>
            <person name="Brettin T."/>
            <person name="Bruce D."/>
            <person name="Han C."/>
            <person name="Tapia R."/>
            <person name="Gilna P."/>
            <person name="Schmutz J."/>
            <person name="Larimer F."/>
            <person name="Land M."/>
            <person name="Hauser L."/>
            <person name="Kyrpides N."/>
            <person name="Mikhailova N."/>
            <person name="Nealson K."/>
            <person name="Konstantinidis K."/>
            <person name="Klappenbach J."/>
            <person name="Tiedje J."/>
            <person name="Richardson P."/>
        </authorList>
    </citation>
    <scope>NUCLEOTIDE SEQUENCE [LARGE SCALE GENOMIC DNA]</scope>
    <source>
        <strain>MR-7</strain>
    </source>
</reference>
<accession>Q0I0T4</accession>
<comment type="function">
    <text evidence="1">Catalyzes the final step of fatty acid oxidation in which acetyl-CoA is released and the CoA ester of a fatty acid two carbons shorter is formed.</text>
</comment>
<comment type="catalytic activity">
    <reaction evidence="1">
        <text>an acyl-CoA + acetyl-CoA = a 3-oxoacyl-CoA + CoA</text>
        <dbReference type="Rhea" id="RHEA:21564"/>
        <dbReference type="ChEBI" id="CHEBI:57287"/>
        <dbReference type="ChEBI" id="CHEBI:57288"/>
        <dbReference type="ChEBI" id="CHEBI:58342"/>
        <dbReference type="ChEBI" id="CHEBI:90726"/>
        <dbReference type="EC" id="2.3.1.16"/>
    </reaction>
</comment>
<comment type="pathway">
    <text evidence="1">Lipid metabolism; fatty acid beta-oxidation.</text>
</comment>
<comment type="subunit">
    <text evidence="1">Heterotetramer of two alpha chains (FadB) and two beta chains (FadA).</text>
</comment>
<comment type="subcellular location">
    <subcellularLocation>
        <location evidence="1">Cytoplasm</location>
    </subcellularLocation>
</comment>
<comment type="similarity">
    <text evidence="1">Belongs to the thiolase-like superfamily. Thiolase family.</text>
</comment>
<name>FADA_SHESR</name>